<evidence type="ECO:0000255" key="1">
    <source>
        <dbReference type="HAMAP-Rule" id="MF_00379"/>
    </source>
</evidence>
<reference key="1">
    <citation type="journal article" date="2005" name="J. Bacteriol.">
        <title>Whole-genome sequence analysis of Pseudomonas syringae pv. phaseolicola 1448A reveals divergence among pathovars in genes involved in virulence and transposition.</title>
        <authorList>
            <person name="Joardar V."/>
            <person name="Lindeberg M."/>
            <person name="Jackson R.W."/>
            <person name="Selengut J."/>
            <person name="Dodson R."/>
            <person name="Brinkac L.M."/>
            <person name="Daugherty S.C."/>
            <person name="DeBoy R.T."/>
            <person name="Durkin A.S."/>
            <person name="Gwinn Giglio M."/>
            <person name="Madupu R."/>
            <person name="Nelson W.C."/>
            <person name="Rosovitz M.J."/>
            <person name="Sullivan S.A."/>
            <person name="Crabtree J."/>
            <person name="Creasy T."/>
            <person name="Davidsen T.M."/>
            <person name="Haft D.H."/>
            <person name="Zafar N."/>
            <person name="Zhou L."/>
            <person name="Halpin R."/>
            <person name="Holley T."/>
            <person name="Khouri H.M."/>
            <person name="Feldblyum T.V."/>
            <person name="White O."/>
            <person name="Fraser C.M."/>
            <person name="Chatterjee A.K."/>
            <person name="Cartinhour S."/>
            <person name="Schneider D."/>
            <person name="Mansfield J.W."/>
            <person name="Collmer A."/>
            <person name="Buell R."/>
        </authorList>
    </citation>
    <scope>NUCLEOTIDE SEQUENCE [LARGE SCALE GENOMIC DNA]</scope>
    <source>
        <strain>1448A / Race 6</strain>
    </source>
</reference>
<keyword id="KW-0963">Cytoplasm</keyword>
<keyword id="KW-0342">GTP-binding</keyword>
<keyword id="KW-0378">Hydrolase</keyword>
<keyword id="KW-0460">Magnesium</keyword>
<keyword id="KW-0479">Metal-binding</keyword>
<keyword id="KW-0547">Nucleotide-binding</keyword>
<keyword id="KW-0630">Potassium</keyword>
<keyword id="KW-0819">tRNA processing</keyword>
<protein>
    <recommendedName>
        <fullName evidence="1">tRNA modification GTPase MnmE</fullName>
        <ecNumber evidence="1">3.6.-.-</ecNumber>
    </recommendedName>
</protein>
<organism>
    <name type="scientific">Pseudomonas savastanoi pv. phaseolicola (strain 1448A / Race 6)</name>
    <name type="common">Pseudomonas syringae pv. phaseolicola (strain 1448A / Race 6)</name>
    <dbReference type="NCBI Taxonomy" id="264730"/>
    <lineage>
        <taxon>Bacteria</taxon>
        <taxon>Pseudomonadati</taxon>
        <taxon>Pseudomonadota</taxon>
        <taxon>Gammaproteobacteria</taxon>
        <taxon>Pseudomonadales</taxon>
        <taxon>Pseudomonadaceae</taxon>
        <taxon>Pseudomonas</taxon>
    </lineage>
</organism>
<accession>Q48BF3</accession>
<comment type="function">
    <text evidence="1">Exhibits a very high intrinsic GTPase hydrolysis rate. Involved in the addition of a carboxymethylaminomethyl (cmnm) group at the wobble position (U34) of certain tRNAs, forming tRNA-cmnm(5)s(2)U34.</text>
</comment>
<comment type="cofactor">
    <cofactor evidence="1">
        <name>K(+)</name>
        <dbReference type="ChEBI" id="CHEBI:29103"/>
    </cofactor>
    <text evidence="1">Binds 1 potassium ion per subunit.</text>
</comment>
<comment type="subunit">
    <text evidence="1">Homodimer. Heterotetramer of two MnmE and two MnmG subunits.</text>
</comment>
<comment type="subcellular location">
    <subcellularLocation>
        <location evidence="1">Cytoplasm</location>
    </subcellularLocation>
</comment>
<comment type="similarity">
    <text evidence="1">Belongs to the TRAFAC class TrmE-Era-EngA-EngB-Septin-like GTPase superfamily. TrmE GTPase family.</text>
</comment>
<sequence length="456" mass="48819">MNVPRETIAAIATAQGRGGVGIVRVSGPLAGRAAEAIIGRTLKPRFAHYGPFVDDAGQVLDEGIALYFPGPNSFTGEDVLELQGHGGPIVLDMLLQRCLQLGSRLARPGEFSERAFLNDKLDLAQAEAIADLIEASSAQAARNALRSLQGAFSRRVDNLTEKLISLRIYVEAAIDFPEEEIDFLADGHVLNMLDDVRAELSTVLREAGQGALLRDGMTVVIAGRPNAGKSSLLNALAGREAAIVTEIAGTTRDVLREHIHIDGMPLHVVDTAGLRDTQDQVEMIGVQRALKAIGEADRILLVVDATAPEAADPFALWPEFLEQRPDPAKVTLIRNKADLSGDPIDLQTSVDGHVTISLSARSGGAGLELLREHLKACMGYEQTSESSFSARRRHLEALRHASDSLEHGRAQLTLAGAGELLAEDLRQAQQALGEITGAFSSDDLLGRIFSSFCIGK</sequence>
<proteinExistence type="inferred from homology"/>
<feature type="chain" id="PRO_1000048852" description="tRNA modification GTPase MnmE">
    <location>
        <begin position="1"/>
        <end position="456"/>
    </location>
</feature>
<feature type="domain" description="TrmE-type G">
    <location>
        <begin position="216"/>
        <end position="379"/>
    </location>
</feature>
<feature type="binding site" evidence="1">
    <location>
        <position position="24"/>
    </location>
    <ligand>
        <name>(6S)-5-formyl-5,6,7,8-tetrahydrofolate</name>
        <dbReference type="ChEBI" id="CHEBI:57457"/>
    </ligand>
</feature>
<feature type="binding site" evidence="1">
    <location>
        <position position="81"/>
    </location>
    <ligand>
        <name>(6S)-5-formyl-5,6,7,8-tetrahydrofolate</name>
        <dbReference type="ChEBI" id="CHEBI:57457"/>
    </ligand>
</feature>
<feature type="binding site" evidence="1">
    <location>
        <position position="120"/>
    </location>
    <ligand>
        <name>(6S)-5-formyl-5,6,7,8-tetrahydrofolate</name>
        <dbReference type="ChEBI" id="CHEBI:57457"/>
    </ligand>
</feature>
<feature type="binding site" evidence="1">
    <location>
        <begin position="226"/>
        <end position="231"/>
    </location>
    <ligand>
        <name>GTP</name>
        <dbReference type="ChEBI" id="CHEBI:37565"/>
    </ligand>
</feature>
<feature type="binding site" evidence="1">
    <location>
        <position position="226"/>
    </location>
    <ligand>
        <name>K(+)</name>
        <dbReference type="ChEBI" id="CHEBI:29103"/>
    </ligand>
</feature>
<feature type="binding site" evidence="1">
    <location>
        <position position="230"/>
    </location>
    <ligand>
        <name>Mg(2+)</name>
        <dbReference type="ChEBI" id="CHEBI:18420"/>
    </ligand>
</feature>
<feature type="binding site" evidence="1">
    <location>
        <begin position="245"/>
        <end position="251"/>
    </location>
    <ligand>
        <name>GTP</name>
        <dbReference type="ChEBI" id="CHEBI:37565"/>
    </ligand>
</feature>
<feature type="binding site" evidence="1">
    <location>
        <position position="245"/>
    </location>
    <ligand>
        <name>K(+)</name>
        <dbReference type="ChEBI" id="CHEBI:29103"/>
    </ligand>
</feature>
<feature type="binding site" evidence="1">
    <location>
        <position position="247"/>
    </location>
    <ligand>
        <name>K(+)</name>
        <dbReference type="ChEBI" id="CHEBI:29103"/>
    </ligand>
</feature>
<feature type="binding site" evidence="1">
    <location>
        <position position="250"/>
    </location>
    <ligand>
        <name>K(+)</name>
        <dbReference type="ChEBI" id="CHEBI:29103"/>
    </ligand>
</feature>
<feature type="binding site" evidence="1">
    <location>
        <position position="251"/>
    </location>
    <ligand>
        <name>Mg(2+)</name>
        <dbReference type="ChEBI" id="CHEBI:18420"/>
    </ligand>
</feature>
<feature type="binding site" evidence="1">
    <location>
        <begin position="270"/>
        <end position="273"/>
    </location>
    <ligand>
        <name>GTP</name>
        <dbReference type="ChEBI" id="CHEBI:37565"/>
    </ligand>
</feature>
<feature type="binding site" evidence="1">
    <location>
        <begin position="335"/>
        <end position="338"/>
    </location>
    <ligand>
        <name>GTP</name>
        <dbReference type="ChEBI" id="CHEBI:37565"/>
    </ligand>
</feature>
<feature type="binding site" evidence="1">
    <location>
        <begin position="359"/>
        <end position="361"/>
    </location>
    <ligand>
        <name>GTP</name>
        <dbReference type="ChEBI" id="CHEBI:37565"/>
    </ligand>
</feature>
<feature type="binding site" evidence="1">
    <location>
        <position position="456"/>
    </location>
    <ligand>
        <name>(6S)-5-formyl-5,6,7,8-tetrahydrofolate</name>
        <dbReference type="ChEBI" id="CHEBI:57457"/>
    </ligand>
</feature>
<gene>
    <name evidence="1" type="primary">mnmE</name>
    <name evidence="1" type="synonym">trmE</name>
    <name type="ordered locus">PSPPH_5219</name>
</gene>
<name>MNME_PSE14</name>
<dbReference type="EC" id="3.6.-.-" evidence="1"/>
<dbReference type="EMBL" id="CP000058">
    <property type="protein sequence ID" value="AAZ35751.1"/>
    <property type="molecule type" value="Genomic_DNA"/>
</dbReference>
<dbReference type="RefSeq" id="WP_004660485.1">
    <property type="nucleotide sequence ID" value="NC_005773.3"/>
</dbReference>
<dbReference type="SMR" id="Q48BF3"/>
<dbReference type="KEGG" id="psp:PSPPH_5219"/>
<dbReference type="eggNOG" id="COG0486">
    <property type="taxonomic scope" value="Bacteria"/>
</dbReference>
<dbReference type="HOGENOM" id="CLU_019624_4_1_6"/>
<dbReference type="Proteomes" id="UP000000551">
    <property type="component" value="Chromosome"/>
</dbReference>
<dbReference type="GO" id="GO:0005829">
    <property type="term" value="C:cytosol"/>
    <property type="evidence" value="ECO:0007669"/>
    <property type="project" value="TreeGrafter"/>
</dbReference>
<dbReference type="GO" id="GO:0005525">
    <property type="term" value="F:GTP binding"/>
    <property type="evidence" value="ECO:0007669"/>
    <property type="project" value="UniProtKB-UniRule"/>
</dbReference>
<dbReference type="GO" id="GO:0003924">
    <property type="term" value="F:GTPase activity"/>
    <property type="evidence" value="ECO:0007669"/>
    <property type="project" value="UniProtKB-UniRule"/>
</dbReference>
<dbReference type="GO" id="GO:0046872">
    <property type="term" value="F:metal ion binding"/>
    <property type="evidence" value="ECO:0007669"/>
    <property type="project" value="UniProtKB-KW"/>
</dbReference>
<dbReference type="GO" id="GO:0030488">
    <property type="term" value="P:tRNA methylation"/>
    <property type="evidence" value="ECO:0007669"/>
    <property type="project" value="TreeGrafter"/>
</dbReference>
<dbReference type="GO" id="GO:0002098">
    <property type="term" value="P:tRNA wobble uridine modification"/>
    <property type="evidence" value="ECO:0007669"/>
    <property type="project" value="TreeGrafter"/>
</dbReference>
<dbReference type="CDD" id="cd04164">
    <property type="entry name" value="trmE"/>
    <property type="match status" value="1"/>
</dbReference>
<dbReference type="CDD" id="cd14858">
    <property type="entry name" value="TrmE_N"/>
    <property type="match status" value="1"/>
</dbReference>
<dbReference type="FunFam" id="3.30.1360.120:FF:000001">
    <property type="entry name" value="tRNA modification GTPase MnmE"/>
    <property type="match status" value="1"/>
</dbReference>
<dbReference type="FunFam" id="3.40.50.300:FF:000249">
    <property type="entry name" value="tRNA modification GTPase MnmE"/>
    <property type="match status" value="1"/>
</dbReference>
<dbReference type="Gene3D" id="3.40.50.300">
    <property type="entry name" value="P-loop containing nucleotide triphosphate hydrolases"/>
    <property type="match status" value="1"/>
</dbReference>
<dbReference type="Gene3D" id="3.30.1360.120">
    <property type="entry name" value="Probable tRNA modification gtpase trme, domain 1"/>
    <property type="match status" value="1"/>
</dbReference>
<dbReference type="Gene3D" id="1.20.120.430">
    <property type="entry name" value="tRNA modification GTPase MnmE domain 2"/>
    <property type="match status" value="1"/>
</dbReference>
<dbReference type="HAMAP" id="MF_00379">
    <property type="entry name" value="GTPase_MnmE"/>
    <property type="match status" value="1"/>
</dbReference>
<dbReference type="InterPro" id="IPR031168">
    <property type="entry name" value="G_TrmE"/>
</dbReference>
<dbReference type="InterPro" id="IPR006073">
    <property type="entry name" value="GTP-bd"/>
</dbReference>
<dbReference type="InterPro" id="IPR018948">
    <property type="entry name" value="GTP-bd_TrmE_N"/>
</dbReference>
<dbReference type="InterPro" id="IPR004520">
    <property type="entry name" value="GTPase_MnmE"/>
</dbReference>
<dbReference type="InterPro" id="IPR027368">
    <property type="entry name" value="MnmE_dom2"/>
</dbReference>
<dbReference type="InterPro" id="IPR025867">
    <property type="entry name" value="MnmE_helical"/>
</dbReference>
<dbReference type="InterPro" id="IPR027417">
    <property type="entry name" value="P-loop_NTPase"/>
</dbReference>
<dbReference type="InterPro" id="IPR005225">
    <property type="entry name" value="Small_GTP-bd"/>
</dbReference>
<dbReference type="InterPro" id="IPR027266">
    <property type="entry name" value="TrmE/GcvT_dom1"/>
</dbReference>
<dbReference type="NCBIfam" id="TIGR00450">
    <property type="entry name" value="mnmE_trmE_thdF"/>
    <property type="match status" value="1"/>
</dbReference>
<dbReference type="NCBIfam" id="NF003661">
    <property type="entry name" value="PRK05291.1-3"/>
    <property type="match status" value="1"/>
</dbReference>
<dbReference type="NCBIfam" id="TIGR00231">
    <property type="entry name" value="small_GTP"/>
    <property type="match status" value="1"/>
</dbReference>
<dbReference type="PANTHER" id="PTHR42714">
    <property type="entry name" value="TRNA MODIFICATION GTPASE GTPBP3"/>
    <property type="match status" value="1"/>
</dbReference>
<dbReference type="PANTHER" id="PTHR42714:SF2">
    <property type="entry name" value="TRNA MODIFICATION GTPASE GTPBP3, MITOCHONDRIAL"/>
    <property type="match status" value="1"/>
</dbReference>
<dbReference type="Pfam" id="PF01926">
    <property type="entry name" value="MMR_HSR1"/>
    <property type="match status" value="1"/>
</dbReference>
<dbReference type="Pfam" id="PF12631">
    <property type="entry name" value="MnmE_helical"/>
    <property type="match status" value="1"/>
</dbReference>
<dbReference type="Pfam" id="PF10396">
    <property type="entry name" value="TrmE_N"/>
    <property type="match status" value="1"/>
</dbReference>
<dbReference type="PRINTS" id="PR00326">
    <property type="entry name" value="GTP1OBG"/>
</dbReference>
<dbReference type="SUPFAM" id="SSF52540">
    <property type="entry name" value="P-loop containing nucleoside triphosphate hydrolases"/>
    <property type="match status" value="1"/>
</dbReference>
<dbReference type="SUPFAM" id="SSF116878">
    <property type="entry name" value="TrmE connector domain"/>
    <property type="match status" value="1"/>
</dbReference>
<dbReference type="PROSITE" id="PS51709">
    <property type="entry name" value="G_TRME"/>
    <property type="match status" value="1"/>
</dbReference>